<comment type="function">
    <text evidence="1">Catalyzes the conversion of urocanate to 4-imidazolone-5-propionate.</text>
</comment>
<comment type="catalytic activity">
    <reaction evidence="1">
        <text>4-imidazolone-5-propanoate = trans-urocanate + H2O</text>
        <dbReference type="Rhea" id="RHEA:13101"/>
        <dbReference type="ChEBI" id="CHEBI:15377"/>
        <dbReference type="ChEBI" id="CHEBI:17771"/>
        <dbReference type="ChEBI" id="CHEBI:77893"/>
        <dbReference type="EC" id="4.2.1.49"/>
    </reaction>
</comment>
<comment type="cofactor">
    <cofactor evidence="1">
        <name>NAD(+)</name>
        <dbReference type="ChEBI" id="CHEBI:57540"/>
    </cofactor>
    <text evidence="1">Binds 1 NAD(+) per subunit.</text>
</comment>
<comment type="pathway">
    <text evidence="1">Amino-acid degradation; L-histidine degradation into L-glutamate; N-formimidoyl-L-glutamate from L-histidine: step 2/3.</text>
</comment>
<comment type="subcellular location">
    <subcellularLocation>
        <location evidence="1">Cytoplasm</location>
    </subcellularLocation>
</comment>
<comment type="similarity">
    <text evidence="1">Belongs to the urocanase family.</text>
</comment>
<feature type="chain" id="PRO_1000129556" description="Urocanate hydratase">
    <location>
        <begin position="1"/>
        <end position="564"/>
    </location>
</feature>
<feature type="active site" evidence="1">
    <location>
        <position position="416"/>
    </location>
</feature>
<feature type="binding site" evidence="1">
    <location>
        <begin position="58"/>
        <end position="59"/>
    </location>
    <ligand>
        <name>NAD(+)</name>
        <dbReference type="ChEBI" id="CHEBI:57540"/>
    </ligand>
</feature>
<feature type="binding site" evidence="1">
    <location>
        <position position="136"/>
    </location>
    <ligand>
        <name>NAD(+)</name>
        <dbReference type="ChEBI" id="CHEBI:57540"/>
    </ligand>
</feature>
<feature type="binding site" evidence="1">
    <location>
        <begin position="182"/>
        <end position="184"/>
    </location>
    <ligand>
        <name>NAD(+)</name>
        <dbReference type="ChEBI" id="CHEBI:57540"/>
    </ligand>
</feature>
<feature type="binding site" evidence="1">
    <location>
        <position position="202"/>
    </location>
    <ligand>
        <name>NAD(+)</name>
        <dbReference type="ChEBI" id="CHEBI:57540"/>
    </ligand>
</feature>
<feature type="binding site" evidence="1">
    <location>
        <position position="207"/>
    </location>
    <ligand>
        <name>NAD(+)</name>
        <dbReference type="ChEBI" id="CHEBI:57540"/>
    </ligand>
</feature>
<feature type="binding site" evidence="1">
    <location>
        <begin position="248"/>
        <end position="249"/>
    </location>
    <ligand>
        <name>NAD(+)</name>
        <dbReference type="ChEBI" id="CHEBI:57540"/>
    </ligand>
</feature>
<feature type="binding site" evidence="1">
    <location>
        <begin position="269"/>
        <end position="273"/>
    </location>
    <ligand>
        <name>NAD(+)</name>
        <dbReference type="ChEBI" id="CHEBI:57540"/>
    </ligand>
</feature>
<feature type="binding site" evidence="1">
    <location>
        <begin position="279"/>
        <end position="280"/>
    </location>
    <ligand>
        <name>NAD(+)</name>
        <dbReference type="ChEBI" id="CHEBI:57540"/>
    </ligand>
</feature>
<feature type="binding site" evidence="1">
    <location>
        <position position="328"/>
    </location>
    <ligand>
        <name>NAD(+)</name>
        <dbReference type="ChEBI" id="CHEBI:57540"/>
    </ligand>
</feature>
<feature type="binding site" evidence="1">
    <location>
        <position position="498"/>
    </location>
    <ligand>
        <name>NAD(+)</name>
        <dbReference type="ChEBI" id="CHEBI:57540"/>
    </ligand>
</feature>
<dbReference type="EC" id="4.2.1.49" evidence="1"/>
<dbReference type="EMBL" id="FM178380">
    <property type="protein sequence ID" value="CAQ81461.1"/>
    <property type="molecule type" value="Genomic_DNA"/>
</dbReference>
<dbReference type="RefSeq" id="WP_012552011.1">
    <property type="nucleotide sequence ID" value="NC_011313.1"/>
</dbReference>
<dbReference type="SMR" id="B6ERX7"/>
<dbReference type="KEGG" id="vsa:VSAL_II0707"/>
<dbReference type="eggNOG" id="COG2987">
    <property type="taxonomic scope" value="Bacteria"/>
</dbReference>
<dbReference type="HOGENOM" id="CLU_018868_0_1_6"/>
<dbReference type="UniPathway" id="UPA00379">
    <property type="reaction ID" value="UER00550"/>
</dbReference>
<dbReference type="Proteomes" id="UP000001730">
    <property type="component" value="Chromosome 2"/>
</dbReference>
<dbReference type="GO" id="GO:0005737">
    <property type="term" value="C:cytoplasm"/>
    <property type="evidence" value="ECO:0007669"/>
    <property type="project" value="UniProtKB-SubCell"/>
</dbReference>
<dbReference type="GO" id="GO:0016153">
    <property type="term" value="F:urocanate hydratase activity"/>
    <property type="evidence" value="ECO:0007669"/>
    <property type="project" value="UniProtKB-UniRule"/>
</dbReference>
<dbReference type="GO" id="GO:0019556">
    <property type="term" value="P:L-histidine catabolic process to glutamate and formamide"/>
    <property type="evidence" value="ECO:0007669"/>
    <property type="project" value="UniProtKB-UniPathway"/>
</dbReference>
<dbReference type="GO" id="GO:0019557">
    <property type="term" value="P:L-histidine catabolic process to glutamate and formate"/>
    <property type="evidence" value="ECO:0007669"/>
    <property type="project" value="UniProtKB-UniPathway"/>
</dbReference>
<dbReference type="FunFam" id="3.40.50.10730:FF:000001">
    <property type="entry name" value="Urocanate hydratase"/>
    <property type="match status" value="1"/>
</dbReference>
<dbReference type="Gene3D" id="3.40.50.10730">
    <property type="entry name" value="Urocanase like domains"/>
    <property type="match status" value="1"/>
</dbReference>
<dbReference type="Gene3D" id="3.40.1770.10">
    <property type="entry name" value="Urocanase superfamily"/>
    <property type="match status" value="1"/>
</dbReference>
<dbReference type="HAMAP" id="MF_00577">
    <property type="entry name" value="HutU"/>
    <property type="match status" value="1"/>
</dbReference>
<dbReference type="InterPro" id="IPR055351">
    <property type="entry name" value="Urocanase"/>
</dbReference>
<dbReference type="InterPro" id="IPR023637">
    <property type="entry name" value="Urocanase-like"/>
</dbReference>
<dbReference type="InterPro" id="IPR035401">
    <property type="entry name" value="Urocanase_C"/>
</dbReference>
<dbReference type="InterPro" id="IPR038364">
    <property type="entry name" value="Urocanase_central_sf"/>
</dbReference>
<dbReference type="InterPro" id="IPR023636">
    <property type="entry name" value="Urocanase_CS"/>
</dbReference>
<dbReference type="InterPro" id="IPR035400">
    <property type="entry name" value="Urocanase_N"/>
</dbReference>
<dbReference type="InterPro" id="IPR035085">
    <property type="entry name" value="Urocanase_Rossmann-like"/>
</dbReference>
<dbReference type="InterPro" id="IPR036190">
    <property type="entry name" value="Urocanase_sf"/>
</dbReference>
<dbReference type="NCBIfam" id="TIGR01228">
    <property type="entry name" value="hutU"/>
    <property type="match status" value="1"/>
</dbReference>
<dbReference type="NCBIfam" id="NF003820">
    <property type="entry name" value="PRK05414.1"/>
    <property type="match status" value="1"/>
</dbReference>
<dbReference type="PANTHER" id="PTHR12216">
    <property type="entry name" value="UROCANATE HYDRATASE"/>
    <property type="match status" value="1"/>
</dbReference>
<dbReference type="PANTHER" id="PTHR12216:SF4">
    <property type="entry name" value="UROCANATE HYDRATASE"/>
    <property type="match status" value="1"/>
</dbReference>
<dbReference type="Pfam" id="PF01175">
    <property type="entry name" value="Urocanase"/>
    <property type="match status" value="1"/>
</dbReference>
<dbReference type="Pfam" id="PF17392">
    <property type="entry name" value="Urocanase_C"/>
    <property type="match status" value="1"/>
</dbReference>
<dbReference type="Pfam" id="PF17391">
    <property type="entry name" value="Urocanase_N"/>
    <property type="match status" value="1"/>
</dbReference>
<dbReference type="PIRSF" id="PIRSF001423">
    <property type="entry name" value="Urocanate_hydrat"/>
    <property type="match status" value="1"/>
</dbReference>
<dbReference type="SUPFAM" id="SSF111326">
    <property type="entry name" value="Urocanase"/>
    <property type="match status" value="1"/>
</dbReference>
<dbReference type="PROSITE" id="PS01233">
    <property type="entry name" value="UROCANASE"/>
    <property type="match status" value="1"/>
</dbReference>
<gene>
    <name evidence="1" type="primary">hutU</name>
    <name type="ordered locus">VSAL_II0707</name>
</gene>
<proteinExistence type="inferred from homology"/>
<protein>
    <recommendedName>
        <fullName evidence="1">Urocanate hydratase</fullName>
        <shortName evidence="1">Urocanase</shortName>
        <ecNumber evidence="1">4.2.1.49</ecNumber>
    </recommendedName>
    <alternativeName>
        <fullName evidence="1">Imidazolonepropionate hydrolase</fullName>
    </alternativeName>
</protein>
<keyword id="KW-0963">Cytoplasm</keyword>
<keyword id="KW-0369">Histidine metabolism</keyword>
<keyword id="KW-0456">Lyase</keyword>
<keyword id="KW-0520">NAD</keyword>
<evidence type="ECO:0000255" key="1">
    <source>
        <dbReference type="HAMAP-Rule" id="MF_00577"/>
    </source>
</evidence>
<accession>B6ERX7</accession>
<sequence length="564" mass="61343">MTHTSSSNPRLDESRTIIAPTGTALTAKSWLTEAPLRMLMNNLHPDVAEHPHALVVYGGIGRAARNWQCYDKIVEVLTRLEDDETLLVQSGKPVGVFKTHTNAPRVLIANSNIVPHWANWEHFNELDKQGLMMYGQMTAGSWIYIGSQGIVQGTYETFVAMARQHFDGKAAGRWVLTGGLGGMGGAQPLAATMAGFSMLAVECDESRIDYRLRTGYVDRKATTLDEALAIIEESKQSGTPVSVGLLGNAADVYADIVQRGIVPDITTDQTSAHDPLNGYLPQGWSMEQAAEMRLKDEPAVVIAAKKSMAIQVQAMLDLQKSGSATVDYGNNIRQMALEEGVANAFDFPGFVPAYIRPLFCEGIGPFRWAALSGDPEDIYKTDQKVKELIPDNPHLHNWLDMARERIQFQGLPARICWVGLKDRARLGKAFNEMVKNGELKAPIVIGRDHLDSGSVASPNRETEGMMDGSDAVSDWPLLNALLNTASGATWVSLHHGGGVGMGFSQHSGMVIVCDGTDDAAERVGRVLHNDPATGVMRHADAGYDIAINCAKEQNLDLPMLSEPK</sequence>
<name>HUTU_ALISL</name>
<reference key="1">
    <citation type="journal article" date="2008" name="BMC Genomics">
        <title>The genome sequence of the fish pathogen Aliivibrio salmonicida strain LFI1238 shows extensive evidence of gene decay.</title>
        <authorList>
            <person name="Hjerde E."/>
            <person name="Lorentzen M.S."/>
            <person name="Holden M.T."/>
            <person name="Seeger K."/>
            <person name="Paulsen S."/>
            <person name="Bason N."/>
            <person name="Churcher C."/>
            <person name="Harris D."/>
            <person name="Norbertczak H."/>
            <person name="Quail M.A."/>
            <person name="Sanders S."/>
            <person name="Thurston S."/>
            <person name="Parkhill J."/>
            <person name="Willassen N.P."/>
            <person name="Thomson N.R."/>
        </authorList>
    </citation>
    <scope>NUCLEOTIDE SEQUENCE [LARGE SCALE GENOMIC DNA]</scope>
    <source>
        <strain>LFI1238</strain>
    </source>
</reference>
<organism>
    <name type="scientific">Aliivibrio salmonicida (strain LFI1238)</name>
    <name type="common">Vibrio salmonicida (strain LFI1238)</name>
    <dbReference type="NCBI Taxonomy" id="316275"/>
    <lineage>
        <taxon>Bacteria</taxon>
        <taxon>Pseudomonadati</taxon>
        <taxon>Pseudomonadota</taxon>
        <taxon>Gammaproteobacteria</taxon>
        <taxon>Vibrionales</taxon>
        <taxon>Vibrionaceae</taxon>
        <taxon>Aliivibrio</taxon>
    </lineage>
</organism>